<proteinExistence type="inferred from homology"/>
<keyword id="KW-0208">D-amino acid</keyword>
<keyword id="KW-1015">Disulfide bond</keyword>
<keyword id="KW-1213">G-protein coupled receptor impairing toxin</keyword>
<keyword id="KW-0379">Hydroxylation</keyword>
<keyword id="KW-0964">Secreted</keyword>
<keyword id="KW-0732">Signal</keyword>
<keyword id="KW-0800">Toxin</keyword>
<evidence type="ECO:0000250" key="1">
    <source>
        <dbReference type="UniProtKB" id="P0DQT5"/>
    </source>
</evidence>
<evidence type="ECO:0000255" key="2"/>
<evidence type="ECO:0000269" key="3">
    <source>
    </source>
</evidence>
<evidence type="ECO:0000303" key="4">
    <source>
    </source>
</evidence>
<evidence type="ECO:0000305" key="5"/>
<evidence type="ECO:0000305" key="6">
    <source>
    </source>
</evidence>
<organism>
    <name type="scientific">Conus arenatus</name>
    <name type="common">Sand-dusted cone</name>
    <dbReference type="NCBI Taxonomy" id="89451"/>
    <lineage>
        <taxon>Eukaryota</taxon>
        <taxon>Metazoa</taxon>
        <taxon>Spiralia</taxon>
        <taxon>Lophotrochozoa</taxon>
        <taxon>Mollusca</taxon>
        <taxon>Gastropoda</taxon>
        <taxon>Caenogastropoda</taxon>
        <taxon>Neogastropoda</taxon>
        <taxon>Conoidea</taxon>
        <taxon>Conidae</taxon>
        <taxon>Conus</taxon>
    </lineage>
</organism>
<feature type="signal peptide" evidence="2">
    <location>
        <begin position="1"/>
        <end position="22"/>
    </location>
</feature>
<feature type="propeptide" id="PRO_0000456128" evidence="6">
    <location>
        <begin position="23"/>
        <end position="60"/>
    </location>
</feature>
<feature type="peptide" id="PRO_0000456129" description="Consomatin Ar1" evidence="6">
    <location>
        <begin position="61"/>
        <end position="73"/>
    </location>
</feature>
<feature type="propeptide" id="PRO_0000456130" evidence="6">
    <location>
        <begin position="74"/>
        <end position="82"/>
    </location>
</feature>
<feature type="modified residue" description="D-tryptophan" evidence="1">
    <location>
        <position position="66"/>
    </location>
</feature>
<feature type="modified residue" description="4-hydroxyproline" evidence="5">
    <location>
        <position position="70"/>
    </location>
</feature>
<feature type="modified residue" description="4-hydroxyproline" evidence="5">
    <location>
        <position position="71"/>
    </location>
</feature>
<feature type="modified residue" description="4-hydroxyproline" evidence="5">
    <location>
        <position position="73"/>
    </location>
</feature>
<feature type="disulfide bond" evidence="1">
    <location>
        <begin position="64"/>
        <end position="69"/>
    </location>
</feature>
<dbReference type="GO" id="GO:0005576">
    <property type="term" value="C:extracellular region"/>
    <property type="evidence" value="ECO:0007669"/>
    <property type="project" value="UniProtKB-SubCell"/>
</dbReference>
<dbReference type="GO" id="GO:0090729">
    <property type="term" value="F:toxin activity"/>
    <property type="evidence" value="ECO:0007669"/>
    <property type="project" value="UniProtKB-KW"/>
</dbReference>
<name>CSST1_CONAE</name>
<accession>P0DW23</accession>
<comment type="function">
    <text evidence="1">Moderately activates human somatostatin receptors (SSTR) with a preferential activation of SSTR1 and SSTR4. In vivo, does not cause behavioral changes in mice within a few minutes of intracranial injection, but causes a progressive loss of movement thereafter. Four to five hours after injection, mice recover, even with the highest dose tested. Shows antinociception and antihyperalgesia activities in two mouse models of acute pain, most probably by acting outside the central nervous system.</text>
</comment>
<comment type="subcellular location">
    <subcellularLocation>
        <location evidence="6">Secreted</location>
    </subcellularLocation>
</comment>
<comment type="tissue specificity">
    <text evidence="6">Expressed by the venom duct.</text>
</comment>
<comment type="domain">
    <text evidence="5">The cysteine framework is C-C.</text>
</comment>
<comment type="miscellaneous">
    <text evidence="1">This peptide is an evolutionarily optimized stable analog of somatostatin. In addition, it adopts nearly identical conformations as in the somatostatin drug analog Octreotide. As this drug, it contains a D-Trp at the same position, whose synthesis is a common strategy used for enhancing the metabolic stability of compounds in drug design.</text>
</comment>
<comment type="miscellaneous">
    <text evidence="3">Consomatins evolved by gene duplication of a 'Somatostatin and related peptides (SSRP)' gene expressed in the snail neuroendocrine system.</text>
</comment>
<comment type="miscellaneous">
    <text evidence="1">Negative results: does not activate any of the other 313 GPCRs tested. Shows little or no activating activity at the SSTR2, SSTR3 and SSTR5.</text>
</comment>
<comment type="similarity">
    <text evidence="5">Belongs to the conotoxin C superfamily. Consomatin family.</text>
</comment>
<reference key="1">
    <citation type="journal article" date="2022" name="Mol. Biol. Evol.">
        <title>Reconstructing the origins of the somatostatin and allatostatin-C signaling systems using the accelerated evolution of biodiverse cone snail venoms.</title>
        <authorList>
            <person name="Koch T.L."/>
            <person name="Ramiro I.B.L."/>
            <person name="Florez-Salcedo P."/>
            <person name="Engholm E."/>
            <person name="Jensen K.J."/>
            <person name="Chase K."/>
            <person name="Olivera B.M."/>
            <person name="Bjoern-Yoshimoto W.E."/>
            <person name="Safavi-Hemami H."/>
        </authorList>
    </citation>
    <scope>NUCLEOTIDE SEQUENCE [MRNA]</scope>
    <source>
        <tissue>Venom duct</tissue>
    </source>
</reference>
<sequence length="82" mass="9491">MQTAYWVVVMMMMVWVTAPVSEGGKLSDVIWGLVPDDLTPQIILQILNASRHAYRRVRPRGQICIWKVCPPLPQWIHPLVKR</sequence>
<protein>
    <recommendedName>
        <fullName evidence="4">Consomatin Ar1</fullName>
        <shortName evidence="5">ConSST Ar1</shortName>
    </recommendedName>
    <alternativeName>
        <fullName evidence="4">Somatostatin-related peptide</fullName>
        <shortName evidence="4">SSRP</shortName>
    </alternativeName>
</protein>